<reference key="1">
    <citation type="journal article" date="1991" name="Mol. Microbiol.">
        <title>A suppressor of yeast spp81/ded1 mutations encodes a very similar putative ATP-dependent RNA helicase.</title>
        <authorList>
            <person name="Jamieson D.J."/>
            <person name="Beggs J.D."/>
        </authorList>
    </citation>
    <scope>NUCLEOTIDE SEQUENCE [GENOMIC DNA]</scope>
    <scope>FUNCTION</scope>
    <source>
        <strain>DBY939</strain>
    </source>
</reference>
<reference key="2">
    <citation type="journal article" date="1997" name="Nature">
        <title>The nucleotide sequence of Saccharomyces cerevisiae chromosome XVI.</title>
        <authorList>
            <person name="Bussey H."/>
            <person name="Storms R.K."/>
            <person name="Ahmed A."/>
            <person name="Albermann K."/>
            <person name="Allen E."/>
            <person name="Ansorge W."/>
            <person name="Araujo R."/>
            <person name="Aparicio A."/>
            <person name="Barrell B.G."/>
            <person name="Badcock K."/>
            <person name="Benes V."/>
            <person name="Botstein D."/>
            <person name="Bowman S."/>
            <person name="Brueckner M."/>
            <person name="Carpenter J."/>
            <person name="Cherry J.M."/>
            <person name="Chung E."/>
            <person name="Churcher C.M."/>
            <person name="Coster F."/>
            <person name="Davis K."/>
            <person name="Davis R.W."/>
            <person name="Dietrich F.S."/>
            <person name="Delius H."/>
            <person name="DiPaolo T."/>
            <person name="Dubois E."/>
            <person name="Duesterhoeft A."/>
            <person name="Duncan M."/>
            <person name="Floeth M."/>
            <person name="Fortin N."/>
            <person name="Friesen J.D."/>
            <person name="Fritz C."/>
            <person name="Goffeau A."/>
            <person name="Hall J."/>
            <person name="Hebling U."/>
            <person name="Heumann K."/>
            <person name="Hilbert H."/>
            <person name="Hillier L.W."/>
            <person name="Hunicke-Smith S."/>
            <person name="Hyman R.W."/>
            <person name="Johnston M."/>
            <person name="Kalman S."/>
            <person name="Kleine K."/>
            <person name="Komp C."/>
            <person name="Kurdi O."/>
            <person name="Lashkari D."/>
            <person name="Lew H."/>
            <person name="Lin A."/>
            <person name="Lin D."/>
            <person name="Louis E.J."/>
            <person name="Marathe R."/>
            <person name="Messenguy F."/>
            <person name="Mewes H.-W."/>
            <person name="Mirtipati S."/>
            <person name="Moestl D."/>
            <person name="Mueller-Auer S."/>
            <person name="Namath A."/>
            <person name="Nentwich U."/>
            <person name="Oefner P."/>
            <person name="Pearson D."/>
            <person name="Petel F.X."/>
            <person name="Pohl T.M."/>
            <person name="Purnelle B."/>
            <person name="Rajandream M.A."/>
            <person name="Rechmann S."/>
            <person name="Rieger M."/>
            <person name="Riles L."/>
            <person name="Roberts D."/>
            <person name="Schaefer M."/>
            <person name="Scharfe M."/>
            <person name="Scherens B."/>
            <person name="Schramm S."/>
            <person name="Schroeder M."/>
            <person name="Sdicu A.-M."/>
            <person name="Tettelin H."/>
            <person name="Urrestarazu L.A."/>
            <person name="Ushinsky S."/>
            <person name="Vierendeels F."/>
            <person name="Vissers S."/>
            <person name="Voss H."/>
            <person name="Walsh S.V."/>
            <person name="Wambutt R."/>
            <person name="Wang Y."/>
            <person name="Wedler E."/>
            <person name="Wedler H."/>
            <person name="Winnett E."/>
            <person name="Zhong W.-W."/>
            <person name="Zollner A."/>
            <person name="Vo D.H."/>
            <person name="Hani J."/>
        </authorList>
    </citation>
    <scope>NUCLEOTIDE SEQUENCE [LARGE SCALE GENOMIC DNA]</scope>
    <source>
        <strain>ATCC 204508 / S288c</strain>
    </source>
</reference>
<reference key="3">
    <citation type="journal article" date="2014" name="G3 (Bethesda)">
        <title>The reference genome sequence of Saccharomyces cerevisiae: Then and now.</title>
        <authorList>
            <person name="Engel S.R."/>
            <person name="Dietrich F.S."/>
            <person name="Fisk D.G."/>
            <person name="Binkley G."/>
            <person name="Balakrishnan R."/>
            <person name="Costanzo M.C."/>
            <person name="Dwight S.S."/>
            <person name="Hitz B.C."/>
            <person name="Karra K."/>
            <person name="Nash R.S."/>
            <person name="Weng S."/>
            <person name="Wong E.D."/>
            <person name="Lloyd P."/>
            <person name="Skrzypek M.S."/>
            <person name="Miyasato S.R."/>
            <person name="Simison M."/>
            <person name="Cherry J.M."/>
        </authorList>
    </citation>
    <scope>GENOME REANNOTATION</scope>
    <source>
        <strain>ATCC 204508 / S288c</strain>
    </source>
</reference>
<reference key="4">
    <citation type="journal article" date="1990" name="Proc. Natl. Acad. Sci. U.S.A.">
        <title>Identification of five putative yeast RNA helicase genes.</title>
        <authorList>
            <person name="Chang T.-H."/>
            <person name="Arenas J."/>
            <person name="Abelson J."/>
        </authorList>
    </citation>
    <scope>NUCLEOTIDE SEQUENCE [GENOMIC DNA] OF 316-500</scope>
</reference>
<reference key="5">
    <citation type="journal article" date="2003" name="Nature">
        <title>Global analysis of protein localization in budding yeast.</title>
        <authorList>
            <person name="Huh W.-K."/>
            <person name="Falvo J.V."/>
            <person name="Gerke L.C."/>
            <person name="Carroll A.S."/>
            <person name="Howson R.W."/>
            <person name="Weissman J.S."/>
            <person name="O'Shea E.K."/>
        </authorList>
    </citation>
    <scope>SUBCELLULAR LOCATION [LARGE SCALE ANALYSIS]</scope>
</reference>
<reference key="6">
    <citation type="journal article" date="2003" name="Nature">
        <title>Global analysis of protein expression in yeast.</title>
        <authorList>
            <person name="Ghaemmaghami S."/>
            <person name="Huh W.-K."/>
            <person name="Bower K."/>
            <person name="Howson R.W."/>
            <person name="Belle A."/>
            <person name="Dephoure N."/>
            <person name="O'Shea E.K."/>
            <person name="Weissman J.S."/>
        </authorList>
    </citation>
    <scope>LEVEL OF PROTEIN EXPRESSION [LARGE SCALE ANALYSIS]</scope>
</reference>
<reference key="7">
    <citation type="journal article" date="2004" name="Mol. Microbiol.">
        <title>Dynamics and processivity of 40S ribosome scanning on mRNA in yeast.</title>
        <authorList>
            <person name="Berthelot K."/>
            <person name="Muldoon M."/>
            <person name="Rajkowitsch L."/>
            <person name="Hughes J."/>
            <person name="McCarthy J.E.G."/>
        </authorList>
    </citation>
    <scope>FUNCTION</scope>
</reference>
<organism>
    <name type="scientific">Saccharomyces cerevisiae (strain ATCC 204508 / S288c)</name>
    <name type="common">Baker's yeast</name>
    <dbReference type="NCBI Taxonomy" id="559292"/>
    <lineage>
        <taxon>Eukaryota</taxon>
        <taxon>Fungi</taxon>
        <taxon>Dikarya</taxon>
        <taxon>Ascomycota</taxon>
        <taxon>Saccharomycotina</taxon>
        <taxon>Saccharomycetes</taxon>
        <taxon>Saccharomycetales</taxon>
        <taxon>Saccharomycetaceae</taxon>
        <taxon>Saccharomyces</taxon>
    </lineage>
</organism>
<comment type="function">
    <text evidence="1 7 8">ATP-binding RNA helicase involved in translation initiation. Remodels RNA in response to ADP and ATP concentrations by facilitating disruption, but also formation of RNA duplexes (By similarity). Redundant to DED1, may be required in conditions in which DED1 expression is decreased.</text>
</comment>
<comment type="catalytic activity">
    <reaction>
        <text>ATP + H2O = ADP + phosphate + H(+)</text>
        <dbReference type="Rhea" id="RHEA:13065"/>
        <dbReference type="ChEBI" id="CHEBI:15377"/>
        <dbReference type="ChEBI" id="CHEBI:15378"/>
        <dbReference type="ChEBI" id="CHEBI:30616"/>
        <dbReference type="ChEBI" id="CHEBI:43474"/>
        <dbReference type="ChEBI" id="CHEBI:456216"/>
        <dbReference type="EC" id="3.6.4.13"/>
    </reaction>
</comment>
<comment type="interaction">
    <interactant intactId="EBI-5596">
        <id>P24784</id>
    </interactant>
    <interactant intactId="EBI-5744">
        <id>P06634</id>
        <label>DED1</label>
    </interactant>
    <organismsDiffer>false</organismsDiffer>
    <experiments>3</experiments>
</comment>
<comment type="subcellular location">
    <subcellularLocation>
        <location evidence="5">Cytoplasm</location>
    </subcellularLocation>
</comment>
<comment type="domain">
    <text>The Q motif is unique to and characteristic of the DEAD box family of RNA helicases and controls ATP binding and hydrolysis.</text>
</comment>
<comment type="miscellaneous">
    <text evidence="6">Present with 1480 molecules/cell in log phase SD medium.</text>
</comment>
<comment type="similarity">
    <text evidence="9">Belongs to the DEAD box helicase family. DDX3/DED1 subfamily.</text>
</comment>
<keyword id="KW-0067">ATP-binding</keyword>
<keyword id="KW-0963">Cytoplasm</keyword>
<keyword id="KW-0347">Helicase</keyword>
<keyword id="KW-0378">Hydrolase</keyword>
<keyword id="KW-0396">Initiation factor</keyword>
<keyword id="KW-0547">Nucleotide-binding</keyword>
<keyword id="KW-0648">Protein biosynthesis</keyword>
<keyword id="KW-1185">Reference proteome</keyword>
<keyword id="KW-0694">RNA-binding</keyword>
<proteinExistence type="evidence at protein level"/>
<sequence length="617" mass="67917">MADLPQKVSNLSINNKENGGGGGKSSYVPPHLRSRGKPSFERSTPKQEDKVTGGDFFRRAGRQTGNNGGFFGFSKERNGGTSANYNRGGSSNYKSSGNRWVNGKHIPGPKNAKLEAELFGVHDDPDYHSSGIKFDNYDNIPVDASGKDVPEPILDFSSPPLDELLMENIKLASFTKPTPVQKYSIPIVTKGRDLMACAQTGSGKTGGFLFPLFTELFRSGPSPVPEKAQSFYSRKGYPSALVLAPTRELATQIFEEARKFTYRSWVRPCVVYGGAPIGNQMREVDRGCDLLVATPGRLNDLLERGKVSLANIKYLVLDEADRMLDMGFEPQIRHIVEECDMPSVENRQTLMFSATFPVDIQHLARDFLDNYIFLSVGRVGSTSENITQRILYVDDMDKKSALLDLLSAEHKGLTLIFVETKRMADQLTDFLIMQNFKATAIHGDRTQAERERALSAFKANVADILVATAVAARGLDIPNVTHVINYDLPSDIDDYVHRIGRTGRAGNTGVATSFFNSNNQNIVKGLMEILNEANQEVPTFLSDLSRQNSRGGRTRGGGGFFNSRNNGSRDYRKHGGNGSFGSTRPRNTGTSNWGSIGGGFRNDNEKNGYGNSNASWW</sequence>
<name>DBP1_YEAST</name>
<gene>
    <name type="primary">DBP1</name>
    <name type="ordered locus">YPL119C</name>
    <name type="ORF">LPH8C</name>
</gene>
<feature type="chain" id="PRO_0000055016" description="ATP-dependent RNA helicase DBP1">
    <location>
        <begin position="1"/>
        <end position="617"/>
    </location>
</feature>
<feature type="domain" description="Helicase ATP-binding" evidence="2">
    <location>
        <begin position="185"/>
        <end position="374"/>
    </location>
</feature>
<feature type="domain" description="Helicase C-terminal" evidence="3">
    <location>
        <begin position="385"/>
        <end position="545"/>
    </location>
</feature>
<feature type="region of interest" description="Disordered" evidence="4">
    <location>
        <begin position="1"/>
        <end position="90"/>
    </location>
</feature>
<feature type="region of interest" description="Disordered" evidence="4">
    <location>
        <begin position="542"/>
        <end position="617"/>
    </location>
</feature>
<feature type="short sequence motif" description="Q motif">
    <location>
        <begin position="154"/>
        <end position="182"/>
    </location>
</feature>
<feature type="short sequence motif" description="DEAD box">
    <location>
        <begin position="318"/>
        <end position="321"/>
    </location>
</feature>
<feature type="compositionally biased region" description="Polar residues" evidence="4">
    <location>
        <begin position="7"/>
        <end position="17"/>
    </location>
</feature>
<feature type="compositionally biased region" description="Basic and acidic residues" evidence="4">
    <location>
        <begin position="38"/>
        <end position="58"/>
    </location>
</feature>
<feature type="compositionally biased region" description="Polar residues" evidence="4">
    <location>
        <begin position="79"/>
        <end position="90"/>
    </location>
</feature>
<feature type="compositionally biased region" description="Polar residues" evidence="4">
    <location>
        <begin position="580"/>
        <end position="594"/>
    </location>
</feature>
<feature type="binding site" evidence="2">
    <location>
        <begin position="198"/>
        <end position="205"/>
    </location>
    <ligand>
        <name>ATP</name>
        <dbReference type="ChEBI" id="CHEBI:30616"/>
    </ligand>
</feature>
<feature type="sequence conflict" description="In Ref. 1; CAA39465." evidence="9" ref="1">
    <original>ST</original>
    <variation>RS</variation>
    <location>
        <begin position="43"/>
        <end position="44"/>
    </location>
</feature>
<feature type="sequence conflict" description="In Ref. 1; CAA39465." evidence="9" ref="1">
    <original>E</original>
    <variation>K</variation>
    <location>
        <position position="48"/>
    </location>
</feature>
<feature type="sequence conflict" description="In Ref. 1; CAA39465." evidence="9" ref="1">
    <original>G</original>
    <variation>R</variation>
    <location>
        <position position="88"/>
    </location>
</feature>
<feature type="sequence conflict" description="In Ref. 1; CAA39465." evidence="9" ref="1">
    <original>E</original>
    <variation>QK</variation>
    <location>
        <position position="115"/>
    </location>
</feature>
<feature type="sequence conflict" description="In Ref. 4; no nucleotide entry." evidence="9" ref="4">
    <original>V</original>
    <variation>I</variation>
    <location>
        <position position="496"/>
    </location>
</feature>
<accession>P24784</accession>
<accession>D6W3P9</accession>
<accession>P20446</accession>
<dbReference type="EC" id="3.6.4.13"/>
<dbReference type="EMBL" id="X55993">
    <property type="protein sequence ID" value="CAA39465.1"/>
    <property type="molecule type" value="Genomic_DNA"/>
</dbReference>
<dbReference type="EMBL" id="U43503">
    <property type="protein sequence ID" value="AAB68243.1"/>
    <property type="molecule type" value="Genomic_DNA"/>
</dbReference>
<dbReference type="EMBL" id="BK006949">
    <property type="protein sequence ID" value="DAA11315.1"/>
    <property type="molecule type" value="Genomic_DNA"/>
</dbReference>
<dbReference type="PIR" id="S62003">
    <property type="entry name" value="S62003"/>
</dbReference>
<dbReference type="RefSeq" id="NP_015206.1">
    <property type="nucleotide sequence ID" value="NM_001183933.1"/>
</dbReference>
<dbReference type="SMR" id="P24784"/>
<dbReference type="BioGRID" id="36062">
    <property type="interactions" value="113"/>
</dbReference>
<dbReference type="DIP" id="DIP-2576N"/>
<dbReference type="FunCoup" id="P24784">
    <property type="interactions" value="1227"/>
</dbReference>
<dbReference type="IntAct" id="P24784">
    <property type="interactions" value="9"/>
</dbReference>
<dbReference type="MINT" id="P24784"/>
<dbReference type="STRING" id="4932.YPL119C"/>
<dbReference type="PaxDb" id="4932-YPL119C"/>
<dbReference type="PeptideAtlas" id="P24784"/>
<dbReference type="EnsemblFungi" id="YPL119C_mRNA">
    <property type="protein sequence ID" value="YPL119C"/>
    <property type="gene ID" value="YPL119C"/>
</dbReference>
<dbReference type="GeneID" id="855984"/>
<dbReference type="KEGG" id="sce:YPL119C"/>
<dbReference type="AGR" id="SGD:S000006040"/>
<dbReference type="SGD" id="S000006040">
    <property type="gene designation" value="DBP1"/>
</dbReference>
<dbReference type="VEuPathDB" id="FungiDB:YPL119C"/>
<dbReference type="eggNOG" id="KOG0335">
    <property type="taxonomic scope" value="Eukaryota"/>
</dbReference>
<dbReference type="GeneTree" id="ENSGT00940000157507"/>
<dbReference type="HOGENOM" id="CLU_003041_16_3_1"/>
<dbReference type="InParanoid" id="P24784"/>
<dbReference type="OMA" id="CYRSWVR"/>
<dbReference type="OrthoDB" id="196131at2759"/>
<dbReference type="BioCyc" id="YEAST:G3O-34018-MONOMER"/>
<dbReference type="BioGRID-ORCS" id="855984">
    <property type="hits" value="0 hits in 10 CRISPR screens"/>
</dbReference>
<dbReference type="CD-CODE" id="28F07613">
    <property type="entry name" value="Synthetic Condensate 000134"/>
</dbReference>
<dbReference type="CD-CODE" id="A5E21351">
    <property type="entry name" value="Synthetic Condensate 000135"/>
</dbReference>
<dbReference type="CD-CODE" id="CDDB7C63">
    <property type="entry name" value="Synthetic Condensate 000147"/>
</dbReference>
<dbReference type="PRO" id="PR:P24784"/>
<dbReference type="Proteomes" id="UP000002311">
    <property type="component" value="Chromosome XVI"/>
</dbReference>
<dbReference type="RNAct" id="P24784">
    <property type="molecule type" value="protein"/>
</dbReference>
<dbReference type="GO" id="GO:0005737">
    <property type="term" value="C:cytoplasm"/>
    <property type="evidence" value="ECO:0000314"/>
    <property type="project" value="SGD"/>
</dbReference>
<dbReference type="GO" id="GO:0005634">
    <property type="term" value="C:nucleus"/>
    <property type="evidence" value="ECO:0000318"/>
    <property type="project" value="GO_Central"/>
</dbReference>
<dbReference type="GO" id="GO:0005524">
    <property type="term" value="F:ATP binding"/>
    <property type="evidence" value="ECO:0007669"/>
    <property type="project" value="UniProtKB-KW"/>
</dbReference>
<dbReference type="GO" id="GO:0016887">
    <property type="term" value="F:ATP hydrolysis activity"/>
    <property type="evidence" value="ECO:0000314"/>
    <property type="project" value="SGD"/>
</dbReference>
<dbReference type="GO" id="GO:0033677">
    <property type="term" value="F:DNA/RNA helicase activity"/>
    <property type="evidence" value="ECO:0000314"/>
    <property type="project" value="SGD"/>
</dbReference>
<dbReference type="GO" id="GO:0051880">
    <property type="term" value="F:G-quadruplex DNA binding"/>
    <property type="evidence" value="ECO:0000314"/>
    <property type="project" value="SGD"/>
</dbReference>
<dbReference type="GO" id="GO:0003729">
    <property type="term" value="F:mRNA binding"/>
    <property type="evidence" value="ECO:0007005"/>
    <property type="project" value="SGD"/>
</dbReference>
<dbReference type="GO" id="GO:0003724">
    <property type="term" value="F:RNA helicase activity"/>
    <property type="evidence" value="ECO:0000318"/>
    <property type="project" value="GO_Central"/>
</dbReference>
<dbReference type="GO" id="GO:0003727">
    <property type="term" value="F:single-stranded RNA binding"/>
    <property type="evidence" value="ECO:0000314"/>
    <property type="project" value="SGD"/>
</dbReference>
<dbReference type="GO" id="GO:0003743">
    <property type="term" value="F:translation initiation factor activity"/>
    <property type="evidence" value="ECO:0007669"/>
    <property type="project" value="UniProtKB-KW"/>
</dbReference>
<dbReference type="GO" id="GO:1901195">
    <property type="term" value="P:positive regulation of formation of translation preinitiation complex"/>
    <property type="evidence" value="ECO:0000314"/>
    <property type="project" value="SGD"/>
</dbReference>
<dbReference type="GO" id="GO:0006413">
    <property type="term" value="P:translational initiation"/>
    <property type="evidence" value="ECO:0000315"/>
    <property type="project" value="SGD"/>
</dbReference>
<dbReference type="CDD" id="cd17967">
    <property type="entry name" value="DEADc_DDX3_DDX4"/>
    <property type="match status" value="1"/>
</dbReference>
<dbReference type="CDD" id="cd18787">
    <property type="entry name" value="SF2_C_DEAD"/>
    <property type="match status" value="1"/>
</dbReference>
<dbReference type="FunFam" id="3.40.50.300:FF:000160">
    <property type="entry name" value="ATP-dependent RNA helicase DDX3X"/>
    <property type="match status" value="1"/>
</dbReference>
<dbReference type="FunFam" id="3.40.50.300:FF:000008">
    <property type="entry name" value="ATP-dependent RNA helicase RhlB"/>
    <property type="match status" value="1"/>
</dbReference>
<dbReference type="Gene3D" id="3.40.50.300">
    <property type="entry name" value="P-loop containing nucleotide triphosphate hydrolases"/>
    <property type="match status" value="2"/>
</dbReference>
<dbReference type="InterPro" id="IPR011545">
    <property type="entry name" value="DEAD/DEAH_box_helicase_dom"/>
</dbReference>
<dbReference type="InterPro" id="IPR044763">
    <property type="entry name" value="Ded1/Dbp1_DEADc"/>
</dbReference>
<dbReference type="InterPro" id="IPR014001">
    <property type="entry name" value="Helicase_ATP-bd"/>
</dbReference>
<dbReference type="InterPro" id="IPR001650">
    <property type="entry name" value="Helicase_C-like"/>
</dbReference>
<dbReference type="InterPro" id="IPR027417">
    <property type="entry name" value="P-loop_NTPase"/>
</dbReference>
<dbReference type="InterPro" id="IPR000629">
    <property type="entry name" value="RNA-helicase_DEAD-box_CS"/>
</dbReference>
<dbReference type="InterPro" id="IPR014014">
    <property type="entry name" value="RNA_helicase_DEAD_Q_motif"/>
</dbReference>
<dbReference type="PANTHER" id="PTHR47958">
    <property type="entry name" value="ATP-DEPENDENT RNA HELICASE DBP3"/>
    <property type="match status" value="1"/>
</dbReference>
<dbReference type="Pfam" id="PF00270">
    <property type="entry name" value="DEAD"/>
    <property type="match status" value="1"/>
</dbReference>
<dbReference type="Pfam" id="PF00271">
    <property type="entry name" value="Helicase_C"/>
    <property type="match status" value="1"/>
</dbReference>
<dbReference type="SMART" id="SM00487">
    <property type="entry name" value="DEXDc"/>
    <property type="match status" value="1"/>
</dbReference>
<dbReference type="SMART" id="SM00490">
    <property type="entry name" value="HELICc"/>
    <property type="match status" value="1"/>
</dbReference>
<dbReference type="SUPFAM" id="SSF52540">
    <property type="entry name" value="P-loop containing nucleoside triphosphate hydrolases"/>
    <property type="match status" value="1"/>
</dbReference>
<dbReference type="PROSITE" id="PS00039">
    <property type="entry name" value="DEAD_ATP_HELICASE"/>
    <property type="match status" value="1"/>
</dbReference>
<dbReference type="PROSITE" id="PS51192">
    <property type="entry name" value="HELICASE_ATP_BIND_1"/>
    <property type="match status" value="1"/>
</dbReference>
<dbReference type="PROSITE" id="PS51194">
    <property type="entry name" value="HELICASE_CTER"/>
    <property type="match status" value="1"/>
</dbReference>
<dbReference type="PROSITE" id="PS51195">
    <property type="entry name" value="Q_MOTIF"/>
    <property type="match status" value="1"/>
</dbReference>
<protein>
    <recommendedName>
        <fullName>ATP-dependent RNA helicase DBP1</fullName>
        <ecNumber>3.6.4.13</ecNumber>
    </recommendedName>
    <alternativeName>
        <fullName>DEAD box protein 1</fullName>
    </alternativeName>
    <alternativeName>
        <fullName>Helicase CA1</fullName>
    </alternativeName>
</protein>
<evidence type="ECO:0000250" key="1"/>
<evidence type="ECO:0000255" key="2">
    <source>
        <dbReference type="PROSITE-ProRule" id="PRU00541"/>
    </source>
</evidence>
<evidence type="ECO:0000255" key="3">
    <source>
        <dbReference type="PROSITE-ProRule" id="PRU00542"/>
    </source>
</evidence>
<evidence type="ECO:0000256" key="4">
    <source>
        <dbReference type="SAM" id="MobiDB-lite"/>
    </source>
</evidence>
<evidence type="ECO:0000269" key="5">
    <source>
    </source>
</evidence>
<evidence type="ECO:0000269" key="6">
    <source>
    </source>
</evidence>
<evidence type="ECO:0000269" key="7">
    <source>
    </source>
</evidence>
<evidence type="ECO:0000269" key="8">
    <source>
    </source>
</evidence>
<evidence type="ECO:0000305" key="9"/>